<dbReference type="EC" id="2.7.12.1" evidence="9"/>
<dbReference type="EMBL" id="Y18280">
    <property type="protein sequence ID" value="CAA77101.2"/>
    <property type="molecule type" value="mRNA"/>
</dbReference>
<dbReference type="EMBL" id="AJ252172">
    <property type="protein sequence ID" value="CAC20675.1"/>
    <property type="molecule type" value="Genomic_DNA"/>
</dbReference>
<dbReference type="EMBL" id="AJ537610">
    <property type="protein sequence ID" value="CAD61290.1"/>
    <property type="molecule type" value="mRNA"/>
</dbReference>
<dbReference type="EMBL" id="BC019545">
    <property type="protein sequence ID" value="AAH19545.1"/>
    <property type="molecule type" value="mRNA"/>
</dbReference>
<dbReference type="EMBL" id="AK148342">
    <property type="protein sequence ID" value="BAE28495.1"/>
    <property type="molecule type" value="mRNA"/>
</dbReference>
<dbReference type="CCDS" id="CCDS21037.1">
    <molecule id="Q9Z188-1"/>
</dbReference>
<dbReference type="CCDS" id="CCDS57532.1">
    <molecule id="Q9Z188-2"/>
</dbReference>
<dbReference type="CCDS" id="CCDS85251.1">
    <molecule id="Q9Z188-3"/>
</dbReference>
<dbReference type="PIR" id="JG0196">
    <property type="entry name" value="JG0196"/>
</dbReference>
<dbReference type="RefSeq" id="NP_001033046.1">
    <molecule id="Q9Z188-1"/>
    <property type="nucleotide sequence ID" value="NM_001037957.4"/>
</dbReference>
<dbReference type="RefSeq" id="NP_001258299.1">
    <molecule id="Q9Z188-3"/>
    <property type="nucleotide sequence ID" value="NM_001271370.2"/>
</dbReference>
<dbReference type="RefSeq" id="NP_034222.1">
    <molecule id="Q9Z188-2"/>
    <property type="nucleotide sequence ID" value="NM_010092.3"/>
</dbReference>
<dbReference type="SMR" id="Q9Z188"/>
<dbReference type="BioGRID" id="199348">
    <property type="interactions" value="13"/>
</dbReference>
<dbReference type="CORUM" id="Q9Z188"/>
<dbReference type="ELM" id="Q9Z188"/>
<dbReference type="FunCoup" id="Q9Z188">
    <property type="interactions" value="1054"/>
</dbReference>
<dbReference type="STRING" id="10090.ENSMUSP00000133431"/>
<dbReference type="GlyGen" id="Q9Z188">
    <property type="glycosylation" value="3 sites, 1 O-linked glycan (2 sites)"/>
</dbReference>
<dbReference type="iPTMnet" id="Q9Z188"/>
<dbReference type="PhosphoSitePlus" id="Q9Z188"/>
<dbReference type="jPOST" id="Q9Z188"/>
<dbReference type="PaxDb" id="10090-ENSMUSP00000083064"/>
<dbReference type="PeptideAtlas" id="Q9Z188"/>
<dbReference type="ProteomicsDB" id="277655">
    <molecule id="Q9Z188-1"/>
</dbReference>
<dbReference type="ProteomicsDB" id="277656">
    <molecule id="Q9Z188-2"/>
</dbReference>
<dbReference type="ProteomicsDB" id="277657">
    <molecule id="Q9Z188-3"/>
</dbReference>
<dbReference type="Antibodypedia" id="30414">
    <property type="antibodies" value="357 antibodies from 36 providers"/>
</dbReference>
<dbReference type="DNASU" id="13549"/>
<dbReference type="Ensembl" id="ENSMUST00000085901.13">
    <molecule id="Q9Z188-1"/>
    <property type="protein sequence ID" value="ENSMUSP00000083064.7"/>
    <property type="gene ID" value="ENSMUSG00000002409.19"/>
</dbReference>
<dbReference type="Ensembl" id="ENSMUST00000172467.8">
    <molecule id="Q9Z188-3"/>
    <property type="protein sequence ID" value="ENSMUSP00000133431.3"/>
    <property type="gene ID" value="ENSMUSG00000002409.19"/>
</dbReference>
<dbReference type="Ensembl" id="ENSMUST00000172761.8">
    <molecule id="Q9Z188-2"/>
    <property type="protein sequence ID" value="ENSMUSP00000133719.2"/>
    <property type="gene ID" value="ENSMUSG00000002409.19"/>
</dbReference>
<dbReference type="GeneID" id="13549"/>
<dbReference type="KEGG" id="mmu:13549"/>
<dbReference type="UCSC" id="uc009fxz.2">
    <molecule id="Q9Z188-2"/>
    <property type="organism name" value="mouse"/>
</dbReference>
<dbReference type="UCSC" id="uc009fya.2">
    <molecule id="Q9Z188-1"/>
    <property type="organism name" value="mouse"/>
</dbReference>
<dbReference type="UCSC" id="uc009fyb.2">
    <molecule id="Q9Z188-3"/>
    <property type="organism name" value="mouse"/>
</dbReference>
<dbReference type="AGR" id="MGI:1330302"/>
<dbReference type="CTD" id="9149"/>
<dbReference type="MGI" id="MGI:1330302">
    <property type="gene designation" value="Dyrk1b"/>
</dbReference>
<dbReference type="VEuPathDB" id="HostDB:ENSMUSG00000002409"/>
<dbReference type="eggNOG" id="KOG0667">
    <property type="taxonomic scope" value="Eukaryota"/>
</dbReference>
<dbReference type="GeneTree" id="ENSGT00940000160345"/>
<dbReference type="HOGENOM" id="CLU_000288_5_6_1"/>
<dbReference type="InParanoid" id="Q9Z188"/>
<dbReference type="OMA" id="GHSTADY"/>
<dbReference type="OrthoDB" id="75335at9989"/>
<dbReference type="PhylomeDB" id="Q9Z188"/>
<dbReference type="TreeFam" id="TF314624"/>
<dbReference type="BRENDA" id="2.7.12.1">
    <property type="organism ID" value="3474"/>
</dbReference>
<dbReference type="BioGRID-ORCS" id="13549">
    <property type="hits" value="4 hits in 83 CRISPR screens"/>
</dbReference>
<dbReference type="PRO" id="PR:Q9Z188"/>
<dbReference type="Proteomes" id="UP000000589">
    <property type="component" value="Chromosome 7"/>
</dbReference>
<dbReference type="RNAct" id="Q9Z188">
    <property type="molecule type" value="protein"/>
</dbReference>
<dbReference type="Bgee" id="ENSMUSG00000002409">
    <property type="expression patterns" value="Expressed in spermatid and 132 other cell types or tissues"/>
</dbReference>
<dbReference type="GO" id="GO:0005694">
    <property type="term" value="C:chromosome"/>
    <property type="evidence" value="ECO:0007669"/>
    <property type="project" value="UniProtKB-SubCell"/>
</dbReference>
<dbReference type="GO" id="GO:0005730">
    <property type="term" value="C:nucleolus"/>
    <property type="evidence" value="ECO:0007669"/>
    <property type="project" value="UniProtKB-SubCell"/>
</dbReference>
<dbReference type="GO" id="GO:0005654">
    <property type="term" value="C:nucleoplasm"/>
    <property type="evidence" value="ECO:0007669"/>
    <property type="project" value="Ensembl"/>
</dbReference>
<dbReference type="GO" id="GO:0005524">
    <property type="term" value="F:ATP binding"/>
    <property type="evidence" value="ECO:0007669"/>
    <property type="project" value="UniProtKB-KW"/>
</dbReference>
<dbReference type="GO" id="GO:0106310">
    <property type="term" value="F:protein serine kinase activity"/>
    <property type="evidence" value="ECO:0007669"/>
    <property type="project" value="RHEA"/>
</dbReference>
<dbReference type="GO" id="GO:0004674">
    <property type="term" value="F:protein serine/threonine kinase activity"/>
    <property type="evidence" value="ECO:0007669"/>
    <property type="project" value="UniProtKB-KW"/>
</dbReference>
<dbReference type="GO" id="GO:0004712">
    <property type="term" value="F:protein serine/threonine/tyrosine kinase activity"/>
    <property type="evidence" value="ECO:0007669"/>
    <property type="project" value="UniProtKB-EC"/>
</dbReference>
<dbReference type="GO" id="GO:0004713">
    <property type="term" value="F:protein tyrosine kinase activity"/>
    <property type="evidence" value="ECO:0007669"/>
    <property type="project" value="UniProtKB-KW"/>
</dbReference>
<dbReference type="GO" id="GO:0003713">
    <property type="term" value="F:transcription coactivator activity"/>
    <property type="evidence" value="ECO:0007669"/>
    <property type="project" value="Ensembl"/>
</dbReference>
<dbReference type="GO" id="GO:0060612">
    <property type="term" value="P:adipose tissue development"/>
    <property type="evidence" value="ECO:0000250"/>
    <property type="project" value="UniProtKB"/>
</dbReference>
<dbReference type="GO" id="GO:0006281">
    <property type="term" value="P:DNA repair"/>
    <property type="evidence" value="ECO:0007669"/>
    <property type="project" value="UniProtKB-KW"/>
</dbReference>
<dbReference type="GO" id="GO:0007520">
    <property type="term" value="P:myoblast fusion"/>
    <property type="evidence" value="ECO:0000315"/>
    <property type="project" value="MGI"/>
</dbReference>
<dbReference type="CDD" id="cd14226">
    <property type="entry name" value="PKc_DYRK1"/>
    <property type="match status" value="1"/>
</dbReference>
<dbReference type="FunFam" id="3.30.200.20:FF:000087">
    <property type="entry name" value="Dual specificity tyrosine-phosphorylation-regulated kinase 1A"/>
    <property type="match status" value="1"/>
</dbReference>
<dbReference type="FunFam" id="1.10.510.10:FF:000264">
    <property type="entry name" value="dual specificity tyrosine-phosphorylation-regulated kinase 1B isoform X3"/>
    <property type="match status" value="1"/>
</dbReference>
<dbReference type="Gene3D" id="3.30.200.20">
    <property type="entry name" value="Phosphorylase Kinase, domain 1"/>
    <property type="match status" value="1"/>
</dbReference>
<dbReference type="Gene3D" id="1.10.510.10">
    <property type="entry name" value="Transferase(Phosphotransferase) domain 1"/>
    <property type="match status" value="1"/>
</dbReference>
<dbReference type="InterPro" id="IPR011009">
    <property type="entry name" value="Kinase-like_dom_sf"/>
</dbReference>
<dbReference type="InterPro" id="IPR044131">
    <property type="entry name" value="PKc_DYR1A/1B"/>
</dbReference>
<dbReference type="InterPro" id="IPR000719">
    <property type="entry name" value="Prot_kinase_dom"/>
</dbReference>
<dbReference type="InterPro" id="IPR017441">
    <property type="entry name" value="Protein_kinase_ATP_BS"/>
</dbReference>
<dbReference type="InterPro" id="IPR008271">
    <property type="entry name" value="Ser/Thr_kinase_AS"/>
</dbReference>
<dbReference type="InterPro" id="IPR050494">
    <property type="entry name" value="Ser_Thr_dual-spec_kinase"/>
</dbReference>
<dbReference type="PANTHER" id="PTHR24058">
    <property type="entry name" value="DUAL SPECIFICITY PROTEIN KINASE"/>
    <property type="match status" value="1"/>
</dbReference>
<dbReference type="PANTHER" id="PTHR24058:SF12">
    <property type="entry name" value="DUAL SPECIFICITY TYROSINE-PHOSPHORYLATION-REGULATED KINASE 1B"/>
    <property type="match status" value="1"/>
</dbReference>
<dbReference type="Pfam" id="PF00069">
    <property type="entry name" value="Pkinase"/>
    <property type="match status" value="1"/>
</dbReference>
<dbReference type="SMART" id="SM00220">
    <property type="entry name" value="S_TKc"/>
    <property type="match status" value="1"/>
</dbReference>
<dbReference type="SUPFAM" id="SSF56112">
    <property type="entry name" value="Protein kinase-like (PK-like)"/>
    <property type="match status" value="1"/>
</dbReference>
<dbReference type="PROSITE" id="PS00107">
    <property type="entry name" value="PROTEIN_KINASE_ATP"/>
    <property type="match status" value="1"/>
</dbReference>
<dbReference type="PROSITE" id="PS50011">
    <property type="entry name" value="PROTEIN_KINASE_DOM"/>
    <property type="match status" value="1"/>
</dbReference>
<dbReference type="PROSITE" id="PS00108">
    <property type="entry name" value="PROTEIN_KINASE_ST"/>
    <property type="match status" value="1"/>
</dbReference>
<name>DYR1B_MOUSE</name>
<protein>
    <recommendedName>
        <fullName>Dual specificity tyrosine-phosphorylation-regulated kinase 1B</fullName>
        <ecNumber evidence="9">2.7.12.1</ecNumber>
    </recommendedName>
</protein>
<comment type="function">
    <text evidence="4 9">Dual-specificity kinase which possesses both serine/threonine and tyrosine kinase activities (PubMed:12633499). Plays an essential role in ribosomal DNA (rDNA) double-strand break repair and rDNA copy number maintenance. During DNA damage, mediates transcription silencing in part via phosphorylating and enforcing DSB accumulation of the histone methyltransferase EHMT2. Enhances the transcriptional activity of TCF1/HNF1A and FOXO1. Inhibits epithelial cell migration. Mediates colon carcinoma cell survival in mitogen-poor environments. Inhibits the SHH and WNT1 pathways, thereby enhancing adipogenesis. In addition, promotes expression of the gluconeogenic enzyme glucose-6-phosphatase catalytic subunit 1 (G6PC1).</text>
</comment>
<comment type="catalytic activity">
    <reaction evidence="9">
        <text>L-seryl-[protein] + ATP = O-phospho-L-seryl-[protein] + ADP + H(+)</text>
        <dbReference type="Rhea" id="RHEA:17989"/>
        <dbReference type="Rhea" id="RHEA-COMP:9863"/>
        <dbReference type="Rhea" id="RHEA-COMP:11604"/>
        <dbReference type="ChEBI" id="CHEBI:15378"/>
        <dbReference type="ChEBI" id="CHEBI:29999"/>
        <dbReference type="ChEBI" id="CHEBI:30616"/>
        <dbReference type="ChEBI" id="CHEBI:83421"/>
        <dbReference type="ChEBI" id="CHEBI:456216"/>
        <dbReference type="EC" id="2.7.12.1"/>
    </reaction>
</comment>
<comment type="catalytic activity">
    <reaction evidence="9">
        <text>L-threonyl-[protein] + ATP = O-phospho-L-threonyl-[protein] + ADP + H(+)</text>
        <dbReference type="Rhea" id="RHEA:46608"/>
        <dbReference type="Rhea" id="RHEA-COMP:11060"/>
        <dbReference type="Rhea" id="RHEA-COMP:11605"/>
        <dbReference type="ChEBI" id="CHEBI:15378"/>
        <dbReference type="ChEBI" id="CHEBI:30013"/>
        <dbReference type="ChEBI" id="CHEBI:30616"/>
        <dbReference type="ChEBI" id="CHEBI:61977"/>
        <dbReference type="ChEBI" id="CHEBI:456216"/>
        <dbReference type="EC" id="2.7.12.1"/>
    </reaction>
</comment>
<comment type="catalytic activity">
    <reaction evidence="9">
        <text>L-tyrosyl-[protein] + ATP = O-phospho-L-tyrosyl-[protein] + ADP + H(+)</text>
        <dbReference type="Rhea" id="RHEA:10596"/>
        <dbReference type="Rhea" id="RHEA-COMP:10136"/>
        <dbReference type="Rhea" id="RHEA-COMP:20101"/>
        <dbReference type="ChEBI" id="CHEBI:15378"/>
        <dbReference type="ChEBI" id="CHEBI:30616"/>
        <dbReference type="ChEBI" id="CHEBI:46858"/>
        <dbReference type="ChEBI" id="CHEBI:61978"/>
        <dbReference type="ChEBI" id="CHEBI:456216"/>
        <dbReference type="EC" id="2.7.12.1"/>
    </reaction>
</comment>
<comment type="activity regulation">
    <text evidence="1">Inhibited by RANBP9.</text>
</comment>
<comment type="subunit">
    <text evidence="4">Dimer. Interacts with DCOHM, MAP2K3/MKK3, RANBP9 and TCF1/HNF1A. Part of a complex consisting of RANBP9, RAN, DYRK1B and COPS5. Interacts with DCAF7. Interacts with RNF169.</text>
</comment>
<comment type="subcellular location">
    <subcellularLocation>
        <location evidence="4">Nucleus</location>
    </subcellularLocation>
    <subcellularLocation>
        <location evidence="4">Nucleus</location>
        <location evidence="4">Nucleolus</location>
    </subcellularLocation>
    <subcellularLocation>
        <location evidence="4">Chromosome</location>
    </subcellularLocation>
    <text evidence="4">Localizes to sites of double-strand breaks (DSBs) following DNA damage.</text>
</comment>
<comment type="alternative products">
    <event type="alternative splicing"/>
    <isoform>
        <id>Q9Z188-1</id>
        <name>1</name>
        <name>p69</name>
        <sequence type="displayed"/>
    </isoform>
    <isoform>
        <id>Q9Z188-2</id>
        <name>2</name>
        <name>p65</name>
        <sequence type="described" ref="VSP_022955"/>
    </isoform>
    <isoform>
        <id>Q9Z188-3</id>
        <name>3</name>
        <name>p75</name>
        <sequence type="described" ref="VSP_022954"/>
    </isoform>
</comment>
<comment type="tissue specificity">
    <text evidence="9">Isoform 1 and isoform 2 are broadly expressed. Isoform 3 seems specific for skeletal muscle (at protein level).</text>
</comment>
<comment type="developmental stage">
    <text evidence="9">Isoform 1 is present from 14 dpc. Isoform 3 is present from 18 dpc (at protein level).</text>
</comment>
<comment type="PTM">
    <text evidence="1">Phosphorylated by MAP kinase. Tyrosine phosphorylation may be required for dimerization (By similarity).</text>
</comment>
<comment type="miscellaneous">
    <molecule>Isoform 2</molecule>
    <text evidence="13">Inactive.</text>
</comment>
<comment type="similarity">
    <text evidence="13">Belongs to the protein kinase superfamily. CMGC Ser/Thr protein kinase family. MNB/DYRK subfamily.</text>
</comment>
<keyword id="KW-0025">Alternative splicing</keyword>
<keyword id="KW-0067">ATP-binding</keyword>
<keyword id="KW-0158">Chromosome</keyword>
<keyword id="KW-0227">DNA damage</keyword>
<keyword id="KW-0234">DNA repair</keyword>
<keyword id="KW-0418">Kinase</keyword>
<keyword id="KW-0547">Nucleotide-binding</keyword>
<keyword id="KW-0539">Nucleus</keyword>
<keyword id="KW-0597">Phosphoprotein</keyword>
<keyword id="KW-1185">Reference proteome</keyword>
<keyword id="KW-0723">Serine/threonine-protein kinase</keyword>
<keyword id="KW-0808">Transferase</keyword>
<keyword id="KW-0829">Tyrosine-protein kinase</keyword>
<proteinExistence type="evidence at protein level"/>
<gene>
    <name type="primary">Dyrk1b</name>
</gene>
<reference key="1">
    <citation type="journal article" date="1999" name="Biochem. Biophys. Res. Commun.">
        <title>Cloning and characterization of DYRK1B, a novel member of the DYRK family of protein kinases.</title>
        <authorList>
            <person name="Leder S."/>
            <person name="Weber Y."/>
            <person name="Altafaj X."/>
            <person name="Estivill X."/>
            <person name="Joost H.-G."/>
            <person name="Becker W."/>
        </authorList>
    </citation>
    <scope>NUCLEOTIDE SEQUENCE [GENOMIC DNA / MRNA] (ISOFORMS 1 AND 2)</scope>
    <source>
        <strain>129/SvJ</strain>
        <strain>NMRI</strain>
        <tissue>Liver</tissue>
        <tissue>Testis</tissue>
    </source>
</reference>
<reference key="2">
    <citation type="journal article" date="2003" name="Biochem. J.">
        <title>Alternative splicing variants of dual specificity tyrosine phosphorylated and regulated kinase 1B exhibit distinct patterns of expression and functional properties.</title>
        <authorList>
            <person name="Leder S."/>
            <person name="Czajkowska H."/>
            <person name="Maenz B."/>
            <person name="De Graaf K."/>
            <person name="Barthel A."/>
            <person name="Joost H.-G."/>
            <person name="Becker W."/>
        </authorList>
    </citation>
    <scope>NUCLEOTIDE SEQUENCE [MRNA] (ISOFORM 3)</scope>
    <scope>TISSUE SPECIFICITY</scope>
    <scope>DEVELOPMENTAL STAGE</scope>
    <scope>CATALYTIC ACTIVITY</scope>
    <scope>FUNCTION</scope>
    <source>
        <strain>NMRI</strain>
    </source>
</reference>
<reference key="3">
    <citation type="journal article" date="2004" name="Genome Res.">
        <title>The status, quality, and expansion of the NIH full-length cDNA project: the Mammalian Gene Collection (MGC).</title>
        <authorList>
            <consortium name="The MGC Project Team"/>
        </authorList>
    </citation>
    <scope>NUCLEOTIDE SEQUENCE [LARGE SCALE MRNA] (ISOFORM 1)</scope>
    <source>
        <tissue>Eye</tissue>
    </source>
</reference>
<reference key="4">
    <citation type="journal article" date="2005" name="Science">
        <title>The transcriptional landscape of the mammalian genome.</title>
        <authorList>
            <person name="Carninci P."/>
            <person name="Kasukawa T."/>
            <person name="Katayama S."/>
            <person name="Gough J."/>
            <person name="Frith M.C."/>
            <person name="Maeda N."/>
            <person name="Oyama R."/>
            <person name="Ravasi T."/>
            <person name="Lenhard B."/>
            <person name="Wells C."/>
            <person name="Kodzius R."/>
            <person name="Shimokawa K."/>
            <person name="Bajic V.B."/>
            <person name="Brenner S.E."/>
            <person name="Batalov S."/>
            <person name="Forrest A.R."/>
            <person name="Zavolan M."/>
            <person name="Davis M.J."/>
            <person name="Wilming L.G."/>
            <person name="Aidinis V."/>
            <person name="Allen J.E."/>
            <person name="Ambesi-Impiombato A."/>
            <person name="Apweiler R."/>
            <person name="Aturaliya R.N."/>
            <person name="Bailey T.L."/>
            <person name="Bansal M."/>
            <person name="Baxter L."/>
            <person name="Beisel K.W."/>
            <person name="Bersano T."/>
            <person name="Bono H."/>
            <person name="Chalk A.M."/>
            <person name="Chiu K.P."/>
            <person name="Choudhary V."/>
            <person name="Christoffels A."/>
            <person name="Clutterbuck D.R."/>
            <person name="Crowe M.L."/>
            <person name="Dalla E."/>
            <person name="Dalrymple B.P."/>
            <person name="de Bono B."/>
            <person name="Della Gatta G."/>
            <person name="di Bernardo D."/>
            <person name="Down T."/>
            <person name="Engstrom P."/>
            <person name="Fagiolini M."/>
            <person name="Faulkner G."/>
            <person name="Fletcher C.F."/>
            <person name="Fukushima T."/>
            <person name="Furuno M."/>
            <person name="Futaki S."/>
            <person name="Gariboldi M."/>
            <person name="Georgii-Hemming P."/>
            <person name="Gingeras T.R."/>
            <person name="Gojobori T."/>
            <person name="Green R.E."/>
            <person name="Gustincich S."/>
            <person name="Harbers M."/>
            <person name="Hayashi Y."/>
            <person name="Hensch T.K."/>
            <person name="Hirokawa N."/>
            <person name="Hill D."/>
            <person name="Huminiecki L."/>
            <person name="Iacono M."/>
            <person name="Ikeo K."/>
            <person name="Iwama A."/>
            <person name="Ishikawa T."/>
            <person name="Jakt M."/>
            <person name="Kanapin A."/>
            <person name="Katoh M."/>
            <person name="Kawasawa Y."/>
            <person name="Kelso J."/>
            <person name="Kitamura H."/>
            <person name="Kitano H."/>
            <person name="Kollias G."/>
            <person name="Krishnan S.P."/>
            <person name="Kruger A."/>
            <person name="Kummerfeld S.K."/>
            <person name="Kurochkin I.V."/>
            <person name="Lareau L.F."/>
            <person name="Lazarevic D."/>
            <person name="Lipovich L."/>
            <person name="Liu J."/>
            <person name="Liuni S."/>
            <person name="McWilliam S."/>
            <person name="Madan Babu M."/>
            <person name="Madera M."/>
            <person name="Marchionni L."/>
            <person name="Matsuda H."/>
            <person name="Matsuzawa S."/>
            <person name="Miki H."/>
            <person name="Mignone F."/>
            <person name="Miyake S."/>
            <person name="Morris K."/>
            <person name="Mottagui-Tabar S."/>
            <person name="Mulder N."/>
            <person name="Nakano N."/>
            <person name="Nakauchi H."/>
            <person name="Ng P."/>
            <person name="Nilsson R."/>
            <person name="Nishiguchi S."/>
            <person name="Nishikawa S."/>
            <person name="Nori F."/>
            <person name="Ohara O."/>
            <person name="Okazaki Y."/>
            <person name="Orlando V."/>
            <person name="Pang K.C."/>
            <person name="Pavan W.J."/>
            <person name="Pavesi G."/>
            <person name="Pesole G."/>
            <person name="Petrovsky N."/>
            <person name="Piazza S."/>
            <person name="Reed J."/>
            <person name="Reid J.F."/>
            <person name="Ring B.Z."/>
            <person name="Ringwald M."/>
            <person name="Rost B."/>
            <person name="Ruan Y."/>
            <person name="Salzberg S.L."/>
            <person name="Sandelin A."/>
            <person name="Schneider C."/>
            <person name="Schoenbach C."/>
            <person name="Sekiguchi K."/>
            <person name="Semple C.A."/>
            <person name="Seno S."/>
            <person name="Sessa L."/>
            <person name="Sheng Y."/>
            <person name="Shibata Y."/>
            <person name="Shimada H."/>
            <person name="Shimada K."/>
            <person name="Silva D."/>
            <person name="Sinclair B."/>
            <person name="Sperling S."/>
            <person name="Stupka E."/>
            <person name="Sugiura K."/>
            <person name="Sultana R."/>
            <person name="Takenaka Y."/>
            <person name="Taki K."/>
            <person name="Tammoja K."/>
            <person name="Tan S.L."/>
            <person name="Tang S."/>
            <person name="Taylor M.S."/>
            <person name="Tegner J."/>
            <person name="Teichmann S.A."/>
            <person name="Ueda H.R."/>
            <person name="van Nimwegen E."/>
            <person name="Verardo R."/>
            <person name="Wei C.L."/>
            <person name="Yagi K."/>
            <person name="Yamanishi H."/>
            <person name="Zabarovsky E."/>
            <person name="Zhu S."/>
            <person name="Zimmer A."/>
            <person name="Hide W."/>
            <person name="Bult C."/>
            <person name="Grimmond S.M."/>
            <person name="Teasdale R.D."/>
            <person name="Liu E.T."/>
            <person name="Brusic V."/>
            <person name="Quackenbush J."/>
            <person name="Wahlestedt C."/>
            <person name="Mattick J.S."/>
            <person name="Hume D.A."/>
            <person name="Kai C."/>
            <person name="Sasaki D."/>
            <person name="Tomaru Y."/>
            <person name="Fukuda S."/>
            <person name="Kanamori-Katayama M."/>
            <person name="Suzuki M."/>
            <person name="Aoki J."/>
            <person name="Arakawa T."/>
            <person name="Iida J."/>
            <person name="Imamura K."/>
            <person name="Itoh M."/>
            <person name="Kato T."/>
            <person name="Kawaji H."/>
            <person name="Kawagashira N."/>
            <person name="Kawashima T."/>
            <person name="Kojima M."/>
            <person name="Kondo S."/>
            <person name="Konno H."/>
            <person name="Nakano K."/>
            <person name="Ninomiya N."/>
            <person name="Nishio T."/>
            <person name="Okada M."/>
            <person name="Plessy C."/>
            <person name="Shibata K."/>
            <person name="Shiraki T."/>
            <person name="Suzuki S."/>
            <person name="Tagami M."/>
            <person name="Waki K."/>
            <person name="Watahiki A."/>
            <person name="Okamura-Oho Y."/>
            <person name="Suzuki H."/>
            <person name="Kawai J."/>
            <person name="Hayashizaki Y."/>
        </authorList>
    </citation>
    <scope>NUCLEOTIDE SEQUENCE [LARGE SCALE MRNA] OF 1-533 (ISOFORM 2)</scope>
    <source>
        <strain>C57BL/6J</strain>
    </source>
</reference>
<feature type="chain" id="PRO_0000085935" description="Dual specificity tyrosine-phosphorylation-regulated kinase 1B">
    <location>
        <begin position="1"/>
        <end position="629"/>
    </location>
</feature>
<feature type="domain" description="Protein kinase" evidence="6">
    <location>
        <begin position="111"/>
        <end position="431"/>
    </location>
</feature>
<feature type="region of interest" description="Disordered" evidence="8">
    <location>
        <begin position="67"/>
        <end position="86"/>
    </location>
</feature>
<feature type="region of interest" description="Disordered" evidence="8">
    <location>
        <begin position="380"/>
        <end position="399"/>
    </location>
</feature>
<feature type="region of interest" description="Disordered" evidence="8">
    <location>
        <begin position="436"/>
        <end position="480"/>
    </location>
</feature>
<feature type="region of interest" description="Interaction with RANBP9" evidence="1">
    <location>
        <begin position="480"/>
        <end position="520"/>
    </location>
</feature>
<feature type="region of interest" description="Disordered" evidence="8">
    <location>
        <begin position="496"/>
        <end position="629"/>
    </location>
</feature>
<feature type="short sequence motif" description="Bipartite nuclear localization signal" evidence="5">
    <location>
        <begin position="69"/>
        <end position="86"/>
    </location>
</feature>
<feature type="compositionally biased region" description="Low complexity" evidence="8">
    <location>
        <begin position="438"/>
        <end position="477"/>
    </location>
</feature>
<feature type="compositionally biased region" description="Pro residues" evidence="8">
    <location>
        <begin position="552"/>
        <end position="562"/>
    </location>
</feature>
<feature type="compositionally biased region" description="Pro residues" evidence="8">
    <location>
        <begin position="574"/>
        <end position="585"/>
    </location>
</feature>
<feature type="active site" description="Proton acceptor" evidence="6 7">
    <location>
        <position position="239"/>
    </location>
</feature>
<feature type="binding site" evidence="6">
    <location>
        <begin position="117"/>
        <end position="125"/>
    </location>
    <ligand>
        <name>ATP</name>
        <dbReference type="ChEBI" id="CHEBI:30616"/>
    </ligand>
</feature>
<feature type="binding site" evidence="6">
    <location>
        <position position="140"/>
    </location>
    <ligand>
        <name>ATP</name>
        <dbReference type="ChEBI" id="CHEBI:30616"/>
    </ligand>
</feature>
<feature type="binding site" evidence="6">
    <location>
        <begin position="190"/>
        <end position="193"/>
    </location>
    <ligand>
        <name>ATP</name>
        <dbReference type="ChEBI" id="CHEBI:30616"/>
    </ligand>
</feature>
<feature type="modified residue" description="Phosphotyrosine" evidence="2">
    <location>
        <position position="63"/>
    </location>
</feature>
<feature type="modified residue" description="Phosphotyrosine" evidence="2">
    <location>
        <position position="92"/>
    </location>
</feature>
<feature type="modified residue" description="Phosphotyrosine" evidence="2">
    <location>
        <position position="111"/>
    </location>
</feature>
<feature type="modified residue" description="Phosphotyrosine" evidence="2">
    <location>
        <position position="129"/>
    </location>
</feature>
<feature type="modified residue" description="Phosphotyrosine" evidence="3">
    <location>
        <position position="171"/>
    </location>
</feature>
<feature type="modified residue" description="Phosphoserine" evidence="2">
    <location>
        <position position="262"/>
    </location>
</feature>
<feature type="modified residue" description="Phosphotyrosine; by autocatalysis" evidence="4">
    <location>
        <position position="271"/>
    </location>
</feature>
<feature type="modified residue" description="Phosphotyrosine" evidence="4">
    <location>
        <position position="273"/>
    </location>
</feature>
<feature type="modified residue" description="Phosphotyrosine" evidence="2">
    <location>
        <position position="401"/>
    </location>
</feature>
<feature type="modified residue" description="Phosphoserine" evidence="2">
    <location>
        <position position="624"/>
    </location>
</feature>
<feature type="splice variant" id="VSP_022954" description="In isoform 3." evidence="10">
    <original>M</original>
    <variation>MLAARPPHWGPHRAPAPRGPSAIPDPGLSGGGSRGAGCEKAPPGRAPAPGLTPLRPSEPTM</variation>
    <location>
        <position position="1"/>
    </location>
</feature>
<feature type="splice variant" id="VSP_022955" description="In isoform 2." evidence="11 12">
    <location>
        <begin position="366"/>
        <end position="405"/>
    </location>
</feature>
<feature type="sequence conflict" description="In Ref. 4; BAE28495." evidence="13" ref="4">
    <original>P</original>
    <variation>H</variation>
    <location>
        <position position="459"/>
    </location>
</feature>
<feature type="sequence conflict" description="In Ref. 4; BAE28495." evidence="13" ref="4">
    <original>S</original>
    <variation>P</variation>
    <location>
        <position position="531"/>
    </location>
</feature>
<evidence type="ECO:0000250" key="1"/>
<evidence type="ECO:0000250" key="2">
    <source>
        <dbReference type="UniProtKB" id="Q13627"/>
    </source>
</evidence>
<evidence type="ECO:0000250" key="3">
    <source>
        <dbReference type="UniProtKB" id="Q63470"/>
    </source>
</evidence>
<evidence type="ECO:0000250" key="4">
    <source>
        <dbReference type="UniProtKB" id="Q9Y463"/>
    </source>
</evidence>
<evidence type="ECO:0000255" key="5"/>
<evidence type="ECO:0000255" key="6">
    <source>
        <dbReference type="PROSITE-ProRule" id="PRU00159"/>
    </source>
</evidence>
<evidence type="ECO:0000255" key="7">
    <source>
        <dbReference type="PROSITE-ProRule" id="PRU10027"/>
    </source>
</evidence>
<evidence type="ECO:0000256" key="8">
    <source>
        <dbReference type="SAM" id="MobiDB-lite"/>
    </source>
</evidence>
<evidence type="ECO:0000269" key="9">
    <source>
    </source>
</evidence>
<evidence type="ECO:0000303" key="10">
    <source>
    </source>
</evidence>
<evidence type="ECO:0000303" key="11">
    <source>
    </source>
</evidence>
<evidence type="ECO:0000303" key="12">
    <source>
    </source>
</evidence>
<evidence type="ECO:0000305" key="13"/>
<organism>
    <name type="scientific">Mus musculus</name>
    <name type="common">Mouse</name>
    <dbReference type="NCBI Taxonomy" id="10090"/>
    <lineage>
        <taxon>Eukaryota</taxon>
        <taxon>Metazoa</taxon>
        <taxon>Chordata</taxon>
        <taxon>Craniata</taxon>
        <taxon>Vertebrata</taxon>
        <taxon>Euteleostomi</taxon>
        <taxon>Mammalia</taxon>
        <taxon>Eutheria</taxon>
        <taxon>Euarchontoglires</taxon>
        <taxon>Glires</taxon>
        <taxon>Rodentia</taxon>
        <taxon>Myomorpha</taxon>
        <taxon>Muroidea</taxon>
        <taxon>Muridae</taxon>
        <taxon>Murinae</taxon>
        <taxon>Mus</taxon>
        <taxon>Mus</taxon>
    </lineage>
</organism>
<accession>Q9Z188</accession>
<accession>Q3UFR5</accession>
<accession>Q70UR5</accession>
<accession>Q9EPM2</accession>
<sequence length="629" mass="69178">MAVPPGHGPFSGFPGPQEHTQVLPDVRLLPRRLPLAFRDAASAPLRKLSVDLIKTYKHINEVYYAKKKRRAQQAPPQDSSTKKEKKVLNHGYDDDNHDYIVRSGERWLERYEIDSLIGKGSFGQVVKAYDHQTQELVAIKIIKNKKAFLNQAQIELRLLELMNQHDTEMKYYIVHLKRHFMFRNHLCLVFELLSYNLYDLLRNTHFRGVSLNLTRKLAQQLCTALLFLATPELSIIHCDLKPENILLCNPKRSAIKIVDFGSSCQLGQRIYQYIQSRFYRSPEVLLGTPYDLAIDMWSLGCILVEMHTGEPLFSGSNEVDQMSRIVEVLGIPPAPMLEQAPKARKYFERLPGGGWTLRRTKELRKDYQGPGTRRLQEVLGVQTGGPGGRRAGEPGHSPADYLRFQDLVLRMLEYEPAARISPLGALQHGFFRRTADEATNTGPAGSSASTSPAPLDTCPSSSTASSISSSGGSSGSSNDNRAYRYSNRYCGGPGPPITDCEMNSPQVLPSQPLRPWAGGDVPHKTHQAPISASTLPGTGAQLPPLPRCLGRPPSPTSPPPPELMDVSLVGSPPDCSPPPPAPAPQHPAASALRTRMTGGRPPLPPPDDPATLGPRLGLHGVPQSTAASS</sequence>